<reference key="1">
    <citation type="journal article" date="1988" name="Nature">
        <title>A vaccine candidate from the sexual stage of human malaria that contains EGF-like domains.</title>
        <authorList>
            <person name="Kaslow D.C."/>
            <person name="Quakyi I.A."/>
            <person name="Syin C."/>
            <person name="Raum M.G."/>
            <person name="Keister D.B."/>
            <person name="Coligan J.E."/>
            <person name="McCutchan T.F."/>
            <person name="Miller L.H."/>
        </authorList>
    </citation>
    <scope>NUCLEOTIDE SEQUENCE [GENOMIC DNA]</scope>
    <scope>PARTIAL PROTEIN SEQUENCE</scope>
</reference>
<proteinExistence type="evidence at protein level"/>
<name>OS25_PLAFO</name>
<feature type="signal peptide">
    <location>
        <begin position="1"/>
        <end position="16"/>
    </location>
</feature>
<feature type="chain" id="PRO_0000024567" description="25 kDa ookinete surface antigen">
    <location>
        <begin position="17"/>
        <end position="196"/>
    </location>
</feature>
<feature type="propeptide" id="PRO_0000024568" description="Removed in mature form" evidence="2">
    <location>
        <begin position="197"/>
        <end position="217"/>
    </location>
</feature>
<feature type="domain" description="EGF-like 1; truncated">
    <location>
        <begin position="30"/>
        <end position="59"/>
    </location>
</feature>
<feature type="domain" description="EGF-like 2">
    <location>
        <begin position="61"/>
        <end position="106"/>
    </location>
</feature>
<feature type="domain" description="EGF-like 3">
    <location>
        <begin position="106"/>
        <end position="150"/>
    </location>
</feature>
<feature type="domain" description="EGF-like 4">
    <location>
        <begin position="153"/>
        <end position="193"/>
    </location>
</feature>
<feature type="lipid moiety-binding region" description="GPI-anchor amidated serine" evidence="2">
    <location>
        <position position="196"/>
    </location>
</feature>
<feature type="glycosylation site" description="N-linked (GlcNAc...) asparagine" evidence="2">
    <location>
        <position position="112"/>
    </location>
</feature>
<feature type="glycosylation site" description="N-linked (GlcNAc...) asparagine" evidence="2">
    <location>
        <position position="165"/>
    </location>
</feature>
<feature type="glycosylation site" description="N-linked (GlcNAc...) asparagine" evidence="2">
    <location>
        <position position="187"/>
    </location>
</feature>
<feature type="glycosylation site" description="N-linked (GlcNAc...) asparagine" evidence="2">
    <location>
        <position position="202"/>
    </location>
</feature>
<feature type="disulfide bond" evidence="1">
    <location>
        <begin position="65"/>
        <end position="80"/>
    </location>
</feature>
<feature type="disulfide bond" evidence="1">
    <location>
        <begin position="74"/>
        <end position="92"/>
    </location>
</feature>
<feature type="disulfide bond" evidence="1">
    <location>
        <begin position="94"/>
        <end position="105"/>
    </location>
</feature>
<feature type="disulfide bond" evidence="1">
    <location>
        <begin position="110"/>
        <end position="120"/>
    </location>
</feature>
<feature type="disulfide bond" evidence="1">
    <location>
        <begin position="115"/>
        <end position="133"/>
    </location>
</feature>
<feature type="disulfide bond" evidence="1">
    <location>
        <begin position="135"/>
        <end position="149"/>
    </location>
</feature>
<feature type="disulfide bond" evidence="1">
    <location>
        <begin position="157"/>
        <end position="168"/>
    </location>
</feature>
<feature type="disulfide bond" evidence="1">
    <location>
        <begin position="161"/>
        <end position="177"/>
    </location>
</feature>
<feature type="disulfide bond" evidence="1">
    <location>
        <begin position="179"/>
        <end position="192"/>
    </location>
</feature>
<feature type="strand" evidence="5">
    <location>
        <begin position="33"/>
        <end position="37"/>
    </location>
</feature>
<feature type="strand" evidence="5">
    <location>
        <begin position="42"/>
        <end position="47"/>
    </location>
</feature>
<feature type="strand" evidence="5">
    <location>
        <begin position="51"/>
        <end position="54"/>
    </location>
</feature>
<feature type="strand" evidence="5">
    <location>
        <begin position="57"/>
        <end position="59"/>
    </location>
</feature>
<feature type="turn" evidence="5">
    <location>
        <begin position="68"/>
        <end position="71"/>
    </location>
</feature>
<feature type="strand" evidence="5">
    <location>
        <begin position="72"/>
        <end position="75"/>
    </location>
</feature>
<feature type="strand" evidence="5">
    <location>
        <begin position="78"/>
        <end position="83"/>
    </location>
</feature>
<feature type="strand" evidence="6">
    <location>
        <begin position="85"/>
        <end position="87"/>
    </location>
</feature>
<feature type="strand" evidence="5">
    <location>
        <begin position="89"/>
        <end position="94"/>
    </location>
</feature>
<feature type="strand" evidence="5">
    <location>
        <begin position="98"/>
        <end position="101"/>
    </location>
</feature>
<feature type="strand" evidence="5">
    <location>
        <begin position="104"/>
        <end position="107"/>
    </location>
</feature>
<feature type="helix" evidence="5">
    <location>
        <begin position="108"/>
        <end position="110"/>
    </location>
</feature>
<feature type="strand" evidence="5">
    <location>
        <begin position="116"/>
        <end position="122"/>
    </location>
</feature>
<feature type="strand" evidence="7">
    <location>
        <begin position="125"/>
        <end position="128"/>
    </location>
</feature>
<feature type="strand" evidence="5">
    <location>
        <begin position="131"/>
        <end position="135"/>
    </location>
</feature>
<feature type="strand" evidence="5">
    <location>
        <begin position="138"/>
        <end position="140"/>
    </location>
</feature>
<feature type="helix" evidence="5">
    <location>
        <begin position="143"/>
        <end position="145"/>
    </location>
</feature>
<feature type="strand" evidence="5">
    <location>
        <begin position="151"/>
        <end position="153"/>
    </location>
</feature>
<feature type="turn" evidence="7">
    <location>
        <begin position="163"/>
        <end position="165"/>
    </location>
</feature>
<feature type="strand" evidence="5">
    <location>
        <begin position="166"/>
        <end position="171"/>
    </location>
</feature>
<feature type="strand" evidence="5">
    <location>
        <begin position="174"/>
        <end position="179"/>
    </location>
</feature>
<feature type="strand" evidence="4">
    <location>
        <begin position="183"/>
        <end position="185"/>
    </location>
</feature>
<feature type="turn" evidence="4">
    <location>
        <begin position="187"/>
        <end position="189"/>
    </location>
</feature>
<feature type="strand" evidence="4">
    <location>
        <begin position="190"/>
        <end position="193"/>
    </location>
</feature>
<keyword id="KW-0002">3D-structure</keyword>
<keyword id="KW-1003">Cell membrane</keyword>
<keyword id="KW-0903">Direct protein sequencing</keyword>
<keyword id="KW-1015">Disulfide bond</keyword>
<keyword id="KW-0245">EGF-like domain</keyword>
<keyword id="KW-0325">Glycoprotein</keyword>
<keyword id="KW-0336">GPI-anchor</keyword>
<keyword id="KW-0449">Lipoprotein</keyword>
<keyword id="KW-0461">Malaria</keyword>
<keyword id="KW-0472">Membrane</keyword>
<keyword id="KW-0677">Repeat</keyword>
<keyword id="KW-0732">Signal</keyword>
<organism>
    <name type="scientific">Plasmodium falciparum (isolate NF54)</name>
    <dbReference type="NCBI Taxonomy" id="5843"/>
    <lineage>
        <taxon>Eukaryota</taxon>
        <taxon>Sar</taxon>
        <taxon>Alveolata</taxon>
        <taxon>Apicomplexa</taxon>
        <taxon>Aconoidasida</taxon>
        <taxon>Haemosporida</taxon>
        <taxon>Plasmodiidae</taxon>
        <taxon>Plasmodium</taxon>
        <taxon>Plasmodium (Laverania)</taxon>
    </lineage>
</organism>
<sequence length="217" mass="24143">MNKLYSLFLFLFIQLSIKYNNAKVTVDTVCKRGFLIQMSGHLECKCENDLVLVNEETCEEKVLKCDEKTVNKPCGDFSKCIKIDGNPVSYACKCNLGYDMVNNVCIPNECKNVTCGNGKCILDTSNPVKTGVCSCNIGKVPNVQDQNKCSKDGETKCSLKCLKENETCKAVDGIYKCDCKDGFIIDNESSICTAFSAYNILNLSIMFILFSVCFFIM</sequence>
<accession>P13829</accession>
<dbReference type="EMBL" id="X07802">
    <property type="protein sequence ID" value="CAA30646.1"/>
    <property type="molecule type" value="Genomic_DNA"/>
</dbReference>
<dbReference type="PIR" id="S00769">
    <property type="entry name" value="S00769"/>
</dbReference>
<dbReference type="PDB" id="6B08">
    <property type="method" value="X-ray"/>
    <property type="resolution" value="2.20 A"/>
    <property type="chains" value="A=20-193"/>
</dbReference>
<dbReference type="PDB" id="6B0A">
    <property type="method" value="X-ray"/>
    <property type="resolution" value="2.50 A"/>
    <property type="chains" value="A=22-193"/>
</dbReference>
<dbReference type="PDB" id="6B0E">
    <property type="method" value="X-ray"/>
    <property type="resolution" value="3.30 A"/>
    <property type="chains" value="E=22-193"/>
</dbReference>
<dbReference type="PDB" id="6B0G">
    <property type="method" value="X-ray"/>
    <property type="resolution" value="1.90 A"/>
    <property type="chains" value="E=22-193"/>
</dbReference>
<dbReference type="PDB" id="6B0H">
    <property type="method" value="X-ray"/>
    <property type="resolution" value="2.70 A"/>
    <property type="chains" value="I/J=20-193"/>
</dbReference>
<dbReference type="PDB" id="6PHB">
    <property type="method" value="X-ray"/>
    <property type="resolution" value="2.00 A"/>
    <property type="chains" value="E/I=22-193"/>
</dbReference>
<dbReference type="PDB" id="6PHC">
    <property type="method" value="X-ray"/>
    <property type="resolution" value="2.90 A"/>
    <property type="chains" value="E/I=22-193"/>
</dbReference>
<dbReference type="PDB" id="6PHD">
    <property type="method" value="X-ray"/>
    <property type="resolution" value="3.10 A"/>
    <property type="chains" value="C=22-193"/>
</dbReference>
<dbReference type="PDB" id="6PHF">
    <property type="method" value="X-ray"/>
    <property type="resolution" value="3.10 A"/>
    <property type="chains" value="E/G=22-193"/>
</dbReference>
<dbReference type="PDB" id="8EZK">
    <property type="method" value="X-ray"/>
    <property type="resolution" value="2.30 A"/>
    <property type="chains" value="A/B=23-193"/>
</dbReference>
<dbReference type="PDB" id="8EZL">
    <property type="method" value="X-ray"/>
    <property type="resolution" value="2.30 A"/>
    <property type="chains" value="A=23-193"/>
</dbReference>
<dbReference type="PDB" id="8EZM">
    <property type="method" value="X-ray"/>
    <property type="resolution" value="2.10 A"/>
    <property type="chains" value="A=23-193"/>
</dbReference>
<dbReference type="PDBsum" id="6B08"/>
<dbReference type="PDBsum" id="6B0A"/>
<dbReference type="PDBsum" id="6B0E"/>
<dbReference type="PDBsum" id="6B0G"/>
<dbReference type="PDBsum" id="6B0H"/>
<dbReference type="PDBsum" id="6PHB"/>
<dbReference type="PDBsum" id="6PHC"/>
<dbReference type="PDBsum" id="6PHD"/>
<dbReference type="PDBsum" id="6PHF"/>
<dbReference type="PDBsum" id="8EZK"/>
<dbReference type="PDBsum" id="8EZL"/>
<dbReference type="PDBsum" id="8EZM"/>
<dbReference type="SMR" id="P13829"/>
<dbReference type="ABCD" id="P13829">
    <property type="antibodies" value="12 sequenced antibodies"/>
</dbReference>
<dbReference type="VEuPathDB" id="PlasmoDB:PfNF54_100035800"/>
<dbReference type="OMA" id="YKCQCME"/>
<dbReference type="GO" id="GO:0009986">
    <property type="term" value="C:cell surface"/>
    <property type="evidence" value="ECO:0007669"/>
    <property type="project" value="InterPro"/>
</dbReference>
<dbReference type="GO" id="GO:0005886">
    <property type="term" value="C:plasma membrane"/>
    <property type="evidence" value="ECO:0007669"/>
    <property type="project" value="UniProtKB-SubCell"/>
</dbReference>
<dbReference type="GO" id="GO:0098552">
    <property type="term" value="C:side of membrane"/>
    <property type="evidence" value="ECO:0007669"/>
    <property type="project" value="UniProtKB-KW"/>
</dbReference>
<dbReference type="FunFam" id="2.90.20.10:FF:000001">
    <property type="entry name" value="25 kDa ookinete surface antigen"/>
    <property type="match status" value="1"/>
</dbReference>
<dbReference type="Gene3D" id="2.90.20.10">
    <property type="entry name" value="Plasmodium vivax P25 domain"/>
    <property type="match status" value="1"/>
</dbReference>
<dbReference type="InterPro" id="IPR000742">
    <property type="entry name" value="EGF-like_dom"/>
</dbReference>
<dbReference type="InterPro" id="IPR010423">
    <property type="entry name" value="Pvs25/Psv28_EGF"/>
</dbReference>
<dbReference type="Pfam" id="PF06247">
    <property type="entry name" value="Plasmod_Pvs28"/>
    <property type="match status" value="4"/>
</dbReference>
<dbReference type="SMART" id="SM00181">
    <property type="entry name" value="EGF"/>
    <property type="match status" value="3"/>
</dbReference>
<dbReference type="PROSITE" id="PS01186">
    <property type="entry name" value="EGF_2"/>
    <property type="match status" value="2"/>
</dbReference>
<evidence type="ECO:0000250" key="1"/>
<evidence type="ECO:0000255" key="2"/>
<evidence type="ECO:0000305" key="3"/>
<evidence type="ECO:0007829" key="4">
    <source>
        <dbReference type="PDB" id="6B08"/>
    </source>
</evidence>
<evidence type="ECO:0007829" key="5">
    <source>
        <dbReference type="PDB" id="6B0G"/>
    </source>
</evidence>
<evidence type="ECO:0007829" key="6">
    <source>
        <dbReference type="PDB" id="6PHB"/>
    </source>
</evidence>
<evidence type="ECO:0007829" key="7">
    <source>
        <dbReference type="PDB" id="8EZM"/>
    </source>
</evidence>
<comment type="subcellular location">
    <subcellularLocation>
        <location evidence="3">Cell membrane</location>
        <topology evidence="3">Lipid-anchor</topology>
        <topology evidence="3">GPI-anchor</topology>
    </subcellularLocation>
</comment>
<comment type="developmental stage">
    <text>Expressed on zygotes and ookinetes.</text>
</comment>
<protein>
    <recommendedName>
        <fullName>25 kDa ookinete surface antigen</fullName>
    </recommendedName>
    <alternativeName>
        <fullName>Pfs25</fullName>
    </alternativeName>
</protein>